<sequence>MIYQSPTIQVELLEDNIAKLCFNAPGSVNKFDRETLASLDAALDSIKQDSNIKALVLTSSKDTFIVGADITEFLGLFAQDDAVLLSWVEQANAVFNKLEDLPFPTASAIKGFALGGGCETILTTDFRIADTTAKIGLPETKLGIIPGFGGTVRLPRVIGADNALEWITTGKDQRAEDALKVGAVDAVVAPQALEAAAIQMLKDAVAEKLDWQARRNRKLSALTLPKLEAMMSFTTAKGMVFAVAGKHYPAPMAAVSVIEQASTKGRAEALQIEHQAFIKLAKTDVAKALIGIFLNDQFVKGKAKKAGKLAKEVNNAAVLGAGIMGGGIAYQSASKGTPIVMKDIAQPALDLGLNEAAKLLSAQVARGRSTPEKMAKVLNNITPSLDYAAIKHSDVVVEAVVEHPKIKAQVLAEVEGYVSEDAIIASNTSTISINLLAKSMKKPERFCGMHFFNPVHKMPLVEVIRGEHSSEETIASVVAYASKMGKTPIVVNDCPGFFVNRVLFPYFAGFNGLLAEGGDFAAIDKVMEKQFGWPMGPAYLLDVVGLDTGHHAQAVMAEGFPDRMGKSGTDAIDVMFENKRLGQKNGKGFYVYSVDSRGKPKKDVDPTSYGLLKDAFGELKAFEADDIIARTMIPMIIETVRCLEEGIVASPAEADMGLVYGLGFPPFRGGVFRYLDTMGVANFVALADKYAHLGGLYQVTDAMRTLAANNGSYYQA</sequence>
<organism>
    <name type="scientific">Shewanella baltica (strain OS223)</name>
    <dbReference type="NCBI Taxonomy" id="407976"/>
    <lineage>
        <taxon>Bacteria</taxon>
        <taxon>Pseudomonadati</taxon>
        <taxon>Pseudomonadota</taxon>
        <taxon>Gammaproteobacteria</taxon>
        <taxon>Alteromonadales</taxon>
        <taxon>Shewanellaceae</taxon>
        <taxon>Shewanella</taxon>
    </lineage>
</organism>
<keyword id="KW-0276">Fatty acid metabolism</keyword>
<keyword id="KW-0413">Isomerase</keyword>
<keyword id="KW-0442">Lipid degradation</keyword>
<keyword id="KW-0443">Lipid metabolism</keyword>
<keyword id="KW-0456">Lyase</keyword>
<keyword id="KW-0511">Multifunctional enzyme</keyword>
<keyword id="KW-0520">NAD</keyword>
<keyword id="KW-0560">Oxidoreductase</keyword>
<gene>
    <name evidence="1" type="primary">fadB</name>
    <name type="ordered locus">Sbal223_0020</name>
</gene>
<name>FADB_SHEB2</name>
<evidence type="ECO:0000255" key="1">
    <source>
        <dbReference type="HAMAP-Rule" id="MF_01621"/>
    </source>
</evidence>
<protein>
    <recommendedName>
        <fullName evidence="1">Fatty acid oxidation complex subunit alpha</fullName>
    </recommendedName>
    <domain>
        <recommendedName>
            <fullName evidence="1">Enoyl-CoA hydratase/Delta(3)-cis-Delta(2)-trans-enoyl-CoA isomerase/3-hydroxybutyryl-CoA epimerase</fullName>
            <ecNumber evidence="1">4.2.1.17</ecNumber>
            <ecNumber evidence="1">5.1.2.3</ecNumber>
            <ecNumber evidence="1">5.3.3.8</ecNumber>
        </recommendedName>
    </domain>
    <domain>
        <recommendedName>
            <fullName evidence="1">3-hydroxyacyl-CoA dehydrogenase</fullName>
            <ecNumber evidence="1">1.1.1.35</ecNumber>
        </recommendedName>
    </domain>
</protein>
<feature type="chain" id="PRO_1000186053" description="Fatty acid oxidation complex subunit alpha">
    <location>
        <begin position="1"/>
        <end position="716"/>
    </location>
</feature>
<feature type="region of interest" description="Enoyl-CoA hydratase/isomerase" evidence="1">
    <location>
        <begin position="1"/>
        <end position="189"/>
    </location>
</feature>
<feature type="region of interest" description="3-hydroxyacyl-CoA dehydrogenase" evidence="1">
    <location>
        <begin position="311"/>
        <end position="716"/>
    </location>
</feature>
<feature type="active site" description="For 3-hydroxyacyl-CoA dehydrogenase activity" evidence="1">
    <location>
        <position position="450"/>
    </location>
</feature>
<feature type="binding site" evidence="1">
    <location>
        <position position="296"/>
    </location>
    <ligand>
        <name>substrate</name>
    </ligand>
</feature>
<feature type="binding site" evidence="1">
    <location>
        <position position="324"/>
    </location>
    <ligand>
        <name>NAD(+)</name>
        <dbReference type="ChEBI" id="CHEBI:57540"/>
    </ligand>
</feature>
<feature type="binding site" evidence="1">
    <location>
        <position position="343"/>
    </location>
    <ligand>
        <name>NAD(+)</name>
        <dbReference type="ChEBI" id="CHEBI:57540"/>
    </ligand>
</feature>
<feature type="binding site" evidence="1">
    <location>
        <begin position="400"/>
        <end position="402"/>
    </location>
    <ligand>
        <name>NAD(+)</name>
        <dbReference type="ChEBI" id="CHEBI:57540"/>
    </ligand>
</feature>
<feature type="binding site" evidence="1">
    <location>
        <position position="407"/>
    </location>
    <ligand>
        <name>NAD(+)</name>
        <dbReference type="ChEBI" id="CHEBI:57540"/>
    </ligand>
</feature>
<feature type="binding site" evidence="1">
    <location>
        <position position="429"/>
    </location>
    <ligand>
        <name>NAD(+)</name>
        <dbReference type="ChEBI" id="CHEBI:57540"/>
    </ligand>
</feature>
<feature type="binding site" evidence="1">
    <location>
        <position position="453"/>
    </location>
    <ligand>
        <name>NAD(+)</name>
        <dbReference type="ChEBI" id="CHEBI:57540"/>
    </ligand>
</feature>
<feature type="binding site" evidence="1">
    <location>
        <position position="500"/>
    </location>
    <ligand>
        <name>substrate</name>
    </ligand>
</feature>
<feature type="binding site" evidence="1">
    <location>
        <position position="660"/>
    </location>
    <ligand>
        <name>substrate</name>
    </ligand>
</feature>
<feature type="site" description="Important for catalytic activity" evidence="1">
    <location>
        <position position="119"/>
    </location>
</feature>
<feature type="site" description="Important for catalytic activity" evidence="1">
    <location>
        <position position="139"/>
    </location>
</feature>
<reference key="1">
    <citation type="submission" date="2008-12" db="EMBL/GenBank/DDBJ databases">
        <title>Complete sequence of chromosome of Shewanella baltica OS223.</title>
        <authorList>
            <consortium name="US DOE Joint Genome Institute"/>
            <person name="Lucas S."/>
            <person name="Copeland A."/>
            <person name="Lapidus A."/>
            <person name="Glavina del Rio T."/>
            <person name="Dalin E."/>
            <person name="Tice H."/>
            <person name="Bruce D."/>
            <person name="Goodwin L."/>
            <person name="Pitluck S."/>
            <person name="Chertkov O."/>
            <person name="Meincke L."/>
            <person name="Brettin T."/>
            <person name="Detter J.C."/>
            <person name="Han C."/>
            <person name="Kuske C.R."/>
            <person name="Larimer F."/>
            <person name="Land M."/>
            <person name="Hauser L."/>
            <person name="Kyrpides N."/>
            <person name="Ovchinnikova G."/>
            <person name="Brettar I."/>
            <person name="Rodrigues J."/>
            <person name="Konstantinidis K."/>
            <person name="Tiedje J."/>
        </authorList>
    </citation>
    <scope>NUCLEOTIDE SEQUENCE [LARGE SCALE GENOMIC DNA]</scope>
    <source>
        <strain>OS223</strain>
    </source>
</reference>
<dbReference type="EC" id="4.2.1.17" evidence="1"/>
<dbReference type="EC" id="5.1.2.3" evidence="1"/>
<dbReference type="EC" id="5.3.3.8" evidence="1"/>
<dbReference type="EC" id="1.1.1.35" evidence="1"/>
<dbReference type="EMBL" id="CP001252">
    <property type="protein sequence ID" value="ACK44564.1"/>
    <property type="molecule type" value="Genomic_DNA"/>
</dbReference>
<dbReference type="RefSeq" id="WP_012586340.1">
    <property type="nucleotide sequence ID" value="NC_011663.1"/>
</dbReference>
<dbReference type="SMR" id="B8E3R3"/>
<dbReference type="KEGG" id="sbp:Sbal223_0020"/>
<dbReference type="HOGENOM" id="CLU_009834_16_3_6"/>
<dbReference type="UniPathway" id="UPA00659"/>
<dbReference type="Proteomes" id="UP000002507">
    <property type="component" value="Chromosome"/>
</dbReference>
<dbReference type="GO" id="GO:0036125">
    <property type="term" value="C:fatty acid beta-oxidation multienzyme complex"/>
    <property type="evidence" value="ECO:0007669"/>
    <property type="project" value="InterPro"/>
</dbReference>
<dbReference type="GO" id="GO:0008692">
    <property type="term" value="F:3-hydroxybutyryl-CoA epimerase activity"/>
    <property type="evidence" value="ECO:0007669"/>
    <property type="project" value="UniProtKB-UniRule"/>
</dbReference>
<dbReference type="GO" id="GO:0004165">
    <property type="term" value="F:delta(3)-delta(2)-enoyl-CoA isomerase activity"/>
    <property type="evidence" value="ECO:0007669"/>
    <property type="project" value="UniProtKB-UniRule"/>
</dbReference>
<dbReference type="GO" id="GO:0004300">
    <property type="term" value="F:enoyl-CoA hydratase activity"/>
    <property type="evidence" value="ECO:0007669"/>
    <property type="project" value="UniProtKB-UniRule"/>
</dbReference>
<dbReference type="GO" id="GO:0016509">
    <property type="term" value="F:long-chain-3-hydroxyacyl-CoA dehydrogenase activity"/>
    <property type="evidence" value="ECO:0007669"/>
    <property type="project" value="TreeGrafter"/>
</dbReference>
<dbReference type="GO" id="GO:0070403">
    <property type="term" value="F:NAD+ binding"/>
    <property type="evidence" value="ECO:0007669"/>
    <property type="project" value="InterPro"/>
</dbReference>
<dbReference type="GO" id="GO:0006635">
    <property type="term" value="P:fatty acid beta-oxidation"/>
    <property type="evidence" value="ECO:0007669"/>
    <property type="project" value="UniProtKB-UniRule"/>
</dbReference>
<dbReference type="CDD" id="cd06558">
    <property type="entry name" value="crotonase-like"/>
    <property type="match status" value="1"/>
</dbReference>
<dbReference type="FunFam" id="1.10.1040.50:FF:000001">
    <property type="entry name" value="Fatty acid oxidation complex subunit alpha"/>
    <property type="match status" value="1"/>
</dbReference>
<dbReference type="FunFam" id="3.40.50.720:FF:000009">
    <property type="entry name" value="Fatty oxidation complex, alpha subunit"/>
    <property type="match status" value="1"/>
</dbReference>
<dbReference type="Gene3D" id="1.10.1040.50">
    <property type="match status" value="1"/>
</dbReference>
<dbReference type="Gene3D" id="3.90.226.10">
    <property type="entry name" value="2-enoyl-CoA Hydratase, Chain A, domain 1"/>
    <property type="match status" value="1"/>
</dbReference>
<dbReference type="Gene3D" id="3.40.50.720">
    <property type="entry name" value="NAD(P)-binding Rossmann-like Domain"/>
    <property type="match status" value="1"/>
</dbReference>
<dbReference type="HAMAP" id="MF_01621">
    <property type="entry name" value="FadB"/>
    <property type="match status" value="1"/>
</dbReference>
<dbReference type="InterPro" id="IPR006180">
    <property type="entry name" value="3-OHacyl-CoA_DH_CS"/>
</dbReference>
<dbReference type="InterPro" id="IPR006176">
    <property type="entry name" value="3-OHacyl-CoA_DH_NAD-bd"/>
</dbReference>
<dbReference type="InterPro" id="IPR006108">
    <property type="entry name" value="3HC_DH_C"/>
</dbReference>
<dbReference type="InterPro" id="IPR008927">
    <property type="entry name" value="6-PGluconate_DH-like_C_sf"/>
</dbReference>
<dbReference type="InterPro" id="IPR029045">
    <property type="entry name" value="ClpP/crotonase-like_dom_sf"/>
</dbReference>
<dbReference type="InterPro" id="IPR001753">
    <property type="entry name" value="Enoyl-CoA_hydra/iso"/>
</dbReference>
<dbReference type="InterPro" id="IPR050136">
    <property type="entry name" value="FA_oxidation_alpha_subunit"/>
</dbReference>
<dbReference type="InterPro" id="IPR012799">
    <property type="entry name" value="FadB"/>
</dbReference>
<dbReference type="InterPro" id="IPR036291">
    <property type="entry name" value="NAD(P)-bd_dom_sf"/>
</dbReference>
<dbReference type="NCBIfam" id="TIGR02437">
    <property type="entry name" value="FadB"/>
    <property type="match status" value="1"/>
</dbReference>
<dbReference type="NCBIfam" id="NF008727">
    <property type="entry name" value="PRK11730.1"/>
    <property type="match status" value="1"/>
</dbReference>
<dbReference type="PANTHER" id="PTHR43612">
    <property type="entry name" value="TRIFUNCTIONAL ENZYME SUBUNIT ALPHA"/>
    <property type="match status" value="1"/>
</dbReference>
<dbReference type="PANTHER" id="PTHR43612:SF3">
    <property type="entry name" value="TRIFUNCTIONAL ENZYME SUBUNIT ALPHA, MITOCHONDRIAL"/>
    <property type="match status" value="1"/>
</dbReference>
<dbReference type="Pfam" id="PF00725">
    <property type="entry name" value="3HCDH"/>
    <property type="match status" value="1"/>
</dbReference>
<dbReference type="Pfam" id="PF02737">
    <property type="entry name" value="3HCDH_N"/>
    <property type="match status" value="1"/>
</dbReference>
<dbReference type="Pfam" id="PF00378">
    <property type="entry name" value="ECH_1"/>
    <property type="match status" value="1"/>
</dbReference>
<dbReference type="SUPFAM" id="SSF48179">
    <property type="entry name" value="6-phosphogluconate dehydrogenase C-terminal domain-like"/>
    <property type="match status" value="2"/>
</dbReference>
<dbReference type="SUPFAM" id="SSF52096">
    <property type="entry name" value="ClpP/crotonase"/>
    <property type="match status" value="1"/>
</dbReference>
<dbReference type="SUPFAM" id="SSF51735">
    <property type="entry name" value="NAD(P)-binding Rossmann-fold domains"/>
    <property type="match status" value="1"/>
</dbReference>
<dbReference type="PROSITE" id="PS00067">
    <property type="entry name" value="3HCDH"/>
    <property type="match status" value="1"/>
</dbReference>
<comment type="function">
    <text evidence="1">Involved in the aerobic and anaerobic degradation of long-chain fatty acids via beta-oxidation cycle. Catalyzes the formation of 3-oxoacyl-CoA from enoyl-CoA via L-3-hydroxyacyl-CoA. It can also use D-3-hydroxyacyl-CoA and cis-3-enoyl-CoA as substrate.</text>
</comment>
<comment type="catalytic activity">
    <reaction evidence="1">
        <text>a (3S)-3-hydroxyacyl-CoA + NAD(+) = a 3-oxoacyl-CoA + NADH + H(+)</text>
        <dbReference type="Rhea" id="RHEA:22432"/>
        <dbReference type="ChEBI" id="CHEBI:15378"/>
        <dbReference type="ChEBI" id="CHEBI:57318"/>
        <dbReference type="ChEBI" id="CHEBI:57540"/>
        <dbReference type="ChEBI" id="CHEBI:57945"/>
        <dbReference type="ChEBI" id="CHEBI:90726"/>
        <dbReference type="EC" id="1.1.1.35"/>
    </reaction>
</comment>
<comment type="catalytic activity">
    <reaction evidence="1">
        <text>a (3S)-3-hydroxyacyl-CoA = a (2E)-enoyl-CoA + H2O</text>
        <dbReference type="Rhea" id="RHEA:16105"/>
        <dbReference type="ChEBI" id="CHEBI:15377"/>
        <dbReference type="ChEBI" id="CHEBI:57318"/>
        <dbReference type="ChEBI" id="CHEBI:58856"/>
        <dbReference type="EC" id="4.2.1.17"/>
    </reaction>
</comment>
<comment type="catalytic activity">
    <reaction evidence="1">
        <text>a 4-saturated-(3S)-3-hydroxyacyl-CoA = a (3E)-enoyl-CoA + H2O</text>
        <dbReference type="Rhea" id="RHEA:20724"/>
        <dbReference type="ChEBI" id="CHEBI:15377"/>
        <dbReference type="ChEBI" id="CHEBI:58521"/>
        <dbReference type="ChEBI" id="CHEBI:137480"/>
        <dbReference type="EC" id="4.2.1.17"/>
    </reaction>
</comment>
<comment type="catalytic activity">
    <reaction evidence="1">
        <text>(3S)-3-hydroxybutanoyl-CoA = (3R)-3-hydroxybutanoyl-CoA</text>
        <dbReference type="Rhea" id="RHEA:21760"/>
        <dbReference type="ChEBI" id="CHEBI:57315"/>
        <dbReference type="ChEBI" id="CHEBI:57316"/>
        <dbReference type="EC" id="5.1.2.3"/>
    </reaction>
</comment>
<comment type="catalytic activity">
    <reaction evidence="1">
        <text>a (3Z)-enoyl-CoA = a 4-saturated (2E)-enoyl-CoA</text>
        <dbReference type="Rhea" id="RHEA:45900"/>
        <dbReference type="ChEBI" id="CHEBI:85097"/>
        <dbReference type="ChEBI" id="CHEBI:85489"/>
        <dbReference type="EC" id="5.3.3.8"/>
    </reaction>
</comment>
<comment type="catalytic activity">
    <reaction evidence="1">
        <text>a (3E)-enoyl-CoA = a 4-saturated (2E)-enoyl-CoA</text>
        <dbReference type="Rhea" id="RHEA:45228"/>
        <dbReference type="ChEBI" id="CHEBI:58521"/>
        <dbReference type="ChEBI" id="CHEBI:85097"/>
        <dbReference type="EC" id="5.3.3.8"/>
    </reaction>
</comment>
<comment type="pathway">
    <text evidence="1">Lipid metabolism; fatty acid beta-oxidation.</text>
</comment>
<comment type="subunit">
    <text evidence="1">Heterotetramer of two alpha chains (FadB) and two beta chains (FadA).</text>
</comment>
<comment type="similarity">
    <text evidence="1">In the N-terminal section; belongs to the enoyl-CoA hydratase/isomerase family.</text>
</comment>
<comment type="similarity">
    <text evidence="1">In the C-terminal section; belongs to the 3-hydroxyacyl-CoA dehydrogenase family.</text>
</comment>
<accession>B8E3R3</accession>
<proteinExistence type="inferred from homology"/>